<feature type="chain" id="PRO_1000186771" description="Fe/S biogenesis protein NfuA">
    <location>
        <begin position="1"/>
        <end position="191"/>
    </location>
</feature>
<feature type="binding site" evidence="1">
    <location>
        <position position="149"/>
    </location>
    <ligand>
        <name>[4Fe-4S] cluster</name>
        <dbReference type="ChEBI" id="CHEBI:49883"/>
    </ligand>
</feature>
<feature type="binding site" evidence="1">
    <location>
        <position position="152"/>
    </location>
    <ligand>
        <name>[4Fe-4S] cluster</name>
        <dbReference type="ChEBI" id="CHEBI:49883"/>
    </ligand>
</feature>
<proteinExistence type="inferred from homology"/>
<reference key="1">
    <citation type="journal article" date="2011" name="J. Bacteriol.">
        <title>Comparative genomics of 28 Salmonella enterica isolates: evidence for CRISPR-mediated adaptive sublineage evolution.</title>
        <authorList>
            <person name="Fricke W.F."/>
            <person name="Mammel M.K."/>
            <person name="McDermott P.F."/>
            <person name="Tartera C."/>
            <person name="White D.G."/>
            <person name="Leclerc J.E."/>
            <person name="Ravel J."/>
            <person name="Cebula T.A."/>
        </authorList>
    </citation>
    <scope>NUCLEOTIDE SEQUENCE [LARGE SCALE GENOMIC DNA]</scope>
    <source>
        <strain>CT_02021853</strain>
    </source>
</reference>
<dbReference type="EMBL" id="CP001144">
    <property type="protein sequence ID" value="ACH76837.1"/>
    <property type="molecule type" value="Genomic_DNA"/>
</dbReference>
<dbReference type="RefSeq" id="WP_000619387.1">
    <property type="nucleotide sequence ID" value="NC_011205.1"/>
</dbReference>
<dbReference type="SMR" id="B5FKD2"/>
<dbReference type="GeneID" id="66757844"/>
<dbReference type="KEGG" id="sed:SeD_A3881"/>
<dbReference type="HOGENOM" id="CLU_094569_0_0_6"/>
<dbReference type="Proteomes" id="UP000008322">
    <property type="component" value="Chromosome"/>
</dbReference>
<dbReference type="GO" id="GO:0051539">
    <property type="term" value="F:4 iron, 4 sulfur cluster binding"/>
    <property type="evidence" value="ECO:0007669"/>
    <property type="project" value="UniProtKB-UniRule"/>
</dbReference>
<dbReference type="GO" id="GO:0005506">
    <property type="term" value="F:iron ion binding"/>
    <property type="evidence" value="ECO:0007669"/>
    <property type="project" value="InterPro"/>
</dbReference>
<dbReference type="GO" id="GO:0016226">
    <property type="term" value="P:iron-sulfur cluster assembly"/>
    <property type="evidence" value="ECO:0007669"/>
    <property type="project" value="UniProtKB-UniRule"/>
</dbReference>
<dbReference type="GO" id="GO:0051604">
    <property type="term" value="P:protein maturation"/>
    <property type="evidence" value="ECO:0007669"/>
    <property type="project" value="UniProtKB-UniRule"/>
</dbReference>
<dbReference type="FunFam" id="2.60.300.12:FF:000004">
    <property type="entry name" value="Fe/S biogenesis protein NfuA"/>
    <property type="match status" value="1"/>
</dbReference>
<dbReference type="FunFam" id="3.30.300.130:FF:000002">
    <property type="entry name" value="Fe/S biogenesis protein NfuA"/>
    <property type="match status" value="1"/>
</dbReference>
<dbReference type="Gene3D" id="3.30.300.130">
    <property type="entry name" value="Fe-S cluster assembly (FSCA)"/>
    <property type="match status" value="1"/>
</dbReference>
<dbReference type="Gene3D" id="2.60.300.12">
    <property type="entry name" value="HesB-like domain"/>
    <property type="match status" value="1"/>
</dbReference>
<dbReference type="HAMAP" id="MF_01637">
    <property type="entry name" value="Fe_S_biogen_NfuA"/>
    <property type="match status" value="1"/>
</dbReference>
<dbReference type="InterPro" id="IPR017726">
    <property type="entry name" value="Fe/S_biogenesis_protein_NfuA"/>
</dbReference>
<dbReference type="InterPro" id="IPR000361">
    <property type="entry name" value="FeS_biogenesis"/>
</dbReference>
<dbReference type="InterPro" id="IPR034904">
    <property type="entry name" value="FSCA_dom_sf"/>
</dbReference>
<dbReference type="InterPro" id="IPR035903">
    <property type="entry name" value="HesB-like_dom_sf"/>
</dbReference>
<dbReference type="InterPro" id="IPR001075">
    <property type="entry name" value="NIF_FeS_clus_asmbl_NifU_C"/>
</dbReference>
<dbReference type="NCBIfam" id="NF008392">
    <property type="entry name" value="PRK11190.1"/>
    <property type="match status" value="1"/>
</dbReference>
<dbReference type="NCBIfam" id="TIGR03341">
    <property type="entry name" value="YhgI_GntY"/>
    <property type="match status" value="1"/>
</dbReference>
<dbReference type="PANTHER" id="PTHR11178:SF51">
    <property type="entry name" value="FE_S BIOGENESIS PROTEIN NFUA"/>
    <property type="match status" value="1"/>
</dbReference>
<dbReference type="PANTHER" id="PTHR11178">
    <property type="entry name" value="IRON-SULFUR CLUSTER SCAFFOLD PROTEIN NFU-RELATED"/>
    <property type="match status" value="1"/>
</dbReference>
<dbReference type="Pfam" id="PF01521">
    <property type="entry name" value="Fe-S_biosyn"/>
    <property type="match status" value="1"/>
</dbReference>
<dbReference type="Pfam" id="PF01106">
    <property type="entry name" value="NifU"/>
    <property type="match status" value="1"/>
</dbReference>
<dbReference type="SUPFAM" id="SSF117916">
    <property type="entry name" value="Fe-S cluster assembly (FSCA) domain-like"/>
    <property type="match status" value="1"/>
</dbReference>
<dbReference type="SUPFAM" id="SSF89360">
    <property type="entry name" value="HesB-like domain"/>
    <property type="match status" value="1"/>
</dbReference>
<comment type="function">
    <text evidence="1">Involved in iron-sulfur cluster biogenesis. Binds a 4Fe-4S cluster, can transfer this cluster to apoproteins, and thereby intervenes in the maturation of Fe/S proteins. Could also act as a scaffold/chaperone for damaged Fe/S proteins.</text>
</comment>
<comment type="cofactor">
    <cofactor evidence="1">
        <name>[4Fe-4S] cluster</name>
        <dbReference type="ChEBI" id="CHEBI:49883"/>
    </cofactor>
    <text evidence="1">Binds 1 [4Fe-4S] cluster per subunit. The cluster is presumably bound at the interface of two monomers.</text>
</comment>
<comment type="subunit">
    <text evidence="1">Homodimer.</text>
</comment>
<comment type="similarity">
    <text evidence="1">Belongs to the NfuA family.</text>
</comment>
<accession>B5FKD2</accession>
<keyword id="KW-0004">4Fe-4S</keyword>
<keyword id="KW-0408">Iron</keyword>
<keyword id="KW-0411">Iron-sulfur</keyword>
<keyword id="KW-0479">Metal-binding</keyword>
<organism>
    <name type="scientific">Salmonella dublin (strain CT_02021853)</name>
    <dbReference type="NCBI Taxonomy" id="439851"/>
    <lineage>
        <taxon>Bacteria</taxon>
        <taxon>Pseudomonadati</taxon>
        <taxon>Pseudomonadota</taxon>
        <taxon>Gammaproteobacteria</taxon>
        <taxon>Enterobacterales</taxon>
        <taxon>Enterobacteriaceae</taxon>
        <taxon>Salmonella</taxon>
    </lineage>
</organism>
<protein>
    <recommendedName>
        <fullName evidence="1">Fe/S biogenesis protein NfuA</fullName>
    </recommendedName>
</protein>
<name>NFUA_SALDC</name>
<sequence length="191" mass="20938">MIRISDAAQAHFAKLLANQEEGTQIRVFVINPGTPNAECGVSYCPPDAVEATDTALKFDLLTAYVDELSAPYLEDAEIDFVTDQLGSQLTLKAPNAKMRKVADDAPLMERVEYALQSQINPQLAGHGGRVSLMEITDEGYAILQFGGGCNGCSMVDVTLKEGIEKQLLNEFPELKGVRDLTEHQRGEHSYY</sequence>
<gene>
    <name evidence="1" type="primary">nfuA</name>
    <name type="ordered locus">SeD_A3881</name>
</gene>
<evidence type="ECO:0000255" key="1">
    <source>
        <dbReference type="HAMAP-Rule" id="MF_01637"/>
    </source>
</evidence>